<gene>
    <name evidence="1" type="primary">fixB</name>
    <name type="ordered locus">SeAg_B0085</name>
</gene>
<proteinExistence type="inferred from homology"/>
<dbReference type="EMBL" id="CP001138">
    <property type="protein sequence ID" value="ACH51996.1"/>
    <property type="molecule type" value="Genomic_DNA"/>
</dbReference>
<dbReference type="RefSeq" id="WP_001032189.1">
    <property type="nucleotide sequence ID" value="NC_011149.1"/>
</dbReference>
<dbReference type="SMR" id="B5F757"/>
<dbReference type="KEGG" id="sea:SeAg_B0085"/>
<dbReference type="HOGENOM" id="CLU_034178_0_1_6"/>
<dbReference type="UniPathway" id="UPA00117"/>
<dbReference type="Proteomes" id="UP000008819">
    <property type="component" value="Chromosome"/>
</dbReference>
<dbReference type="GO" id="GO:0009055">
    <property type="term" value="F:electron transfer activity"/>
    <property type="evidence" value="ECO:0007669"/>
    <property type="project" value="InterPro"/>
</dbReference>
<dbReference type="GO" id="GO:0050660">
    <property type="term" value="F:flavin adenine dinucleotide binding"/>
    <property type="evidence" value="ECO:0007669"/>
    <property type="project" value="InterPro"/>
</dbReference>
<dbReference type="GO" id="GO:0009437">
    <property type="term" value="P:carnitine metabolic process"/>
    <property type="evidence" value="ECO:0007669"/>
    <property type="project" value="UniProtKB-UniRule"/>
</dbReference>
<dbReference type="GO" id="GO:0033539">
    <property type="term" value="P:fatty acid beta-oxidation using acyl-CoA dehydrogenase"/>
    <property type="evidence" value="ECO:0007669"/>
    <property type="project" value="TreeGrafter"/>
</dbReference>
<dbReference type="FunFam" id="3.40.50.1220:FF:000004">
    <property type="entry name" value="Electron transfer flavoprotein"/>
    <property type="match status" value="1"/>
</dbReference>
<dbReference type="FunFam" id="3.40.50.620:FF:000067">
    <property type="entry name" value="Protein FixB"/>
    <property type="match status" value="1"/>
</dbReference>
<dbReference type="Gene3D" id="3.40.50.620">
    <property type="entry name" value="HUPs"/>
    <property type="match status" value="1"/>
</dbReference>
<dbReference type="Gene3D" id="3.40.50.1220">
    <property type="entry name" value="TPP-binding domain"/>
    <property type="match status" value="1"/>
</dbReference>
<dbReference type="HAMAP" id="MF_01056">
    <property type="entry name" value="FixB"/>
    <property type="match status" value="1"/>
</dbReference>
<dbReference type="InterPro" id="IPR029035">
    <property type="entry name" value="DHS-like_NAD/FAD-binding_dom"/>
</dbReference>
<dbReference type="InterPro" id="IPR014730">
    <property type="entry name" value="ETF_a/b_N"/>
</dbReference>
<dbReference type="InterPro" id="IPR001308">
    <property type="entry name" value="ETF_a/FixB"/>
</dbReference>
<dbReference type="InterPro" id="IPR014731">
    <property type="entry name" value="ETF_asu_C"/>
</dbReference>
<dbReference type="InterPro" id="IPR018206">
    <property type="entry name" value="ETF_asu_C_CS"/>
</dbReference>
<dbReference type="InterPro" id="IPR023461">
    <property type="entry name" value="FixB"/>
</dbReference>
<dbReference type="InterPro" id="IPR014729">
    <property type="entry name" value="Rossmann-like_a/b/a_fold"/>
</dbReference>
<dbReference type="NCBIfam" id="NF002889">
    <property type="entry name" value="PRK03363.1"/>
    <property type="match status" value="1"/>
</dbReference>
<dbReference type="PANTHER" id="PTHR43153">
    <property type="entry name" value="ELECTRON TRANSFER FLAVOPROTEIN ALPHA"/>
    <property type="match status" value="1"/>
</dbReference>
<dbReference type="PANTHER" id="PTHR43153:SF5">
    <property type="entry name" value="PROTEIN FIXB-RELATED"/>
    <property type="match status" value="1"/>
</dbReference>
<dbReference type="Pfam" id="PF01012">
    <property type="entry name" value="ETF"/>
    <property type="match status" value="1"/>
</dbReference>
<dbReference type="Pfam" id="PF00766">
    <property type="entry name" value="ETF_alpha"/>
    <property type="match status" value="1"/>
</dbReference>
<dbReference type="PIRSF" id="PIRSF000089">
    <property type="entry name" value="Electra_flavoP_a"/>
    <property type="match status" value="1"/>
</dbReference>
<dbReference type="SMART" id="SM00893">
    <property type="entry name" value="ETF"/>
    <property type="match status" value="1"/>
</dbReference>
<dbReference type="SUPFAM" id="SSF52402">
    <property type="entry name" value="Adenine nucleotide alpha hydrolases-like"/>
    <property type="match status" value="1"/>
</dbReference>
<dbReference type="SUPFAM" id="SSF52467">
    <property type="entry name" value="DHS-like NAD/FAD-binding domain"/>
    <property type="match status" value="1"/>
</dbReference>
<dbReference type="PROSITE" id="PS00696">
    <property type="entry name" value="ETF_ALPHA"/>
    <property type="match status" value="1"/>
</dbReference>
<keyword id="KW-0249">Electron transport</keyword>
<keyword id="KW-0274">FAD</keyword>
<keyword id="KW-0285">Flavoprotein</keyword>
<keyword id="KW-0813">Transport</keyword>
<organism>
    <name type="scientific">Salmonella agona (strain SL483)</name>
    <dbReference type="NCBI Taxonomy" id="454166"/>
    <lineage>
        <taxon>Bacteria</taxon>
        <taxon>Pseudomonadati</taxon>
        <taxon>Pseudomonadota</taxon>
        <taxon>Gammaproteobacteria</taxon>
        <taxon>Enterobacterales</taxon>
        <taxon>Enterobacteriaceae</taxon>
        <taxon>Salmonella</taxon>
    </lineage>
</organism>
<accession>B5F757</accession>
<feature type="chain" id="PRO_1000136336" description="Protein FixB">
    <location>
        <begin position="1"/>
        <end position="313"/>
    </location>
</feature>
<feature type="binding site" evidence="1">
    <location>
        <begin position="255"/>
        <end position="283"/>
    </location>
    <ligand>
        <name>FAD</name>
        <dbReference type="ChEBI" id="CHEBI:57692"/>
    </ligand>
</feature>
<evidence type="ECO:0000255" key="1">
    <source>
        <dbReference type="HAMAP-Rule" id="MF_01056"/>
    </source>
</evidence>
<sequence length="313" mass="33223">MNKFSSVWVFSDTPSRLPELMSGAQAVGEKVNAFVLNEADSATACHLGADHVWLLSGKPEDRMIEDYAAAMAETIRQHSEGGAVLLPNTRRGKLLAAKLGYRLSAAVSNDASDVSLQDGKAAVKHMVYGGLAIGAETIASPFAVITLSSGTFDAQQPDASRSGEMHTVQWQAPATAVTRTATQARQSNSVDLDKARLVVSVGRGIGSKENISLAEALCQTIGAELACSRPVAENEKWMEHERYVGISNLMLKPELYLAVGISGQIQHMVGANGAQTIFAINKDKNAPIFQYADFGIVGDALKILPALTAALAR</sequence>
<reference key="1">
    <citation type="journal article" date="2011" name="J. Bacteriol.">
        <title>Comparative genomics of 28 Salmonella enterica isolates: evidence for CRISPR-mediated adaptive sublineage evolution.</title>
        <authorList>
            <person name="Fricke W.F."/>
            <person name="Mammel M.K."/>
            <person name="McDermott P.F."/>
            <person name="Tartera C."/>
            <person name="White D.G."/>
            <person name="Leclerc J.E."/>
            <person name="Ravel J."/>
            <person name="Cebula T.A."/>
        </authorList>
    </citation>
    <scope>NUCLEOTIDE SEQUENCE [LARGE SCALE GENOMIC DNA]</scope>
    <source>
        <strain>SL483</strain>
    </source>
</reference>
<name>FIXB_SALA4</name>
<protein>
    <recommendedName>
        <fullName evidence="1">Protein FixB</fullName>
    </recommendedName>
</protein>
<comment type="function">
    <text evidence="1">Required for anaerobic carnitine reduction. May bring reductant to CaiA.</text>
</comment>
<comment type="pathway">
    <text evidence="1">Amine and polyamine metabolism; carnitine metabolism.</text>
</comment>
<comment type="subunit">
    <text evidence="1">Heterodimer of FixA and FixB.</text>
</comment>
<comment type="similarity">
    <text evidence="1">Belongs to the ETF alpha-subunit/FixB family.</text>
</comment>